<reference key="1">
    <citation type="journal article" date="2010" name="Appl. Environ. Microbiol.">
        <title>The genome sequence of Psychrobacter arcticus 273-4, a psychroactive Siberian permafrost bacterium, reveals mechanisms for adaptation to low-temperature growth.</title>
        <authorList>
            <person name="Ayala-del-Rio H.L."/>
            <person name="Chain P.S."/>
            <person name="Grzymski J.J."/>
            <person name="Ponder M.A."/>
            <person name="Ivanova N."/>
            <person name="Bergholz P.W."/>
            <person name="Di Bartolo G."/>
            <person name="Hauser L."/>
            <person name="Land M."/>
            <person name="Bakermans C."/>
            <person name="Rodrigues D."/>
            <person name="Klappenbach J."/>
            <person name="Zarka D."/>
            <person name="Larimer F."/>
            <person name="Richardson P."/>
            <person name="Murray A."/>
            <person name="Thomashow M."/>
            <person name="Tiedje J.M."/>
        </authorList>
    </citation>
    <scope>NUCLEOTIDE SEQUENCE [LARGE SCALE GENOMIC DNA]</scope>
    <source>
        <strain>DSM 17307 / VKM B-2377 / 273-4</strain>
    </source>
</reference>
<comment type="function">
    <text evidence="1">Removes the formyl group from the N-terminal Met of newly synthesized proteins. Requires at least a dipeptide for an efficient rate of reaction. N-terminal L-methionine is a prerequisite for activity but the enzyme has broad specificity at other positions.</text>
</comment>
<comment type="catalytic activity">
    <reaction evidence="1">
        <text>N-terminal N-formyl-L-methionyl-[peptide] + H2O = N-terminal L-methionyl-[peptide] + formate</text>
        <dbReference type="Rhea" id="RHEA:24420"/>
        <dbReference type="Rhea" id="RHEA-COMP:10639"/>
        <dbReference type="Rhea" id="RHEA-COMP:10640"/>
        <dbReference type="ChEBI" id="CHEBI:15377"/>
        <dbReference type="ChEBI" id="CHEBI:15740"/>
        <dbReference type="ChEBI" id="CHEBI:49298"/>
        <dbReference type="ChEBI" id="CHEBI:64731"/>
        <dbReference type="EC" id="3.5.1.88"/>
    </reaction>
</comment>
<comment type="cofactor">
    <cofactor evidence="1">
        <name>Fe(2+)</name>
        <dbReference type="ChEBI" id="CHEBI:29033"/>
    </cofactor>
    <text evidence="1">Binds 1 Fe(2+) ion.</text>
</comment>
<comment type="similarity">
    <text evidence="1">Belongs to the polypeptide deformylase family.</text>
</comment>
<evidence type="ECO:0000255" key="1">
    <source>
        <dbReference type="HAMAP-Rule" id="MF_00163"/>
    </source>
</evidence>
<gene>
    <name evidence="1" type="primary">def</name>
    <name type="ordered locus">Psyc_0030</name>
</gene>
<proteinExistence type="inferred from homology"/>
<sequence>MALLPILSYPDPRLRMIATPVKEVTAEIKTLITDMIETMYDAEGIGLAASQVDHHIQLIVMDLSEDKDSPRVFINPKVTPLVEEKQPYEEGCLSVPDVYDKVERPNKVRIEAIDQNGNAIDEEVEGLLAVCIQHEIDHLNGVIFVDYLSRLKQTRARDKVRKVLKIREKQGEQVAEKEPQPANS</sequence>
<name>DEF_PSYA2</name>
<dbReference type="EC" id="3.5.1.88" evidence="1"/>
<dbReference type="EMBL" id="CP000082">
    <property type="protein sequence ID" value="AAZ17904.1"/>
    <property type="molecule type" value="Genomic_DNA"/>
</dbReference>
<dbReference type="RefSeq" id="WP_011279343.1">
    <property type="nucleotide sequence ID" value="NC_007204.1"/>
</dbReference>
<dbReference type="SMR" id="Q4FVQ4"/>
<dbReference type="STRING" id="259536.Psyc_0030"/>
<dbReference type="KEGG" id="par:Psyc_0030"/>
<dbReference type="eggNOG" id="COG0242">
    <property type="taxonomic scope" value="Bacteria"/>
</dbReference>
<dbReference type="HOGENOM" id="CLU_061901_2_0_6"/>
<dbReference type="OrthoDB" id="9804313at2"/>
<dbReference type="Proteomes" id="UP000000546">
    <property type="component" value="Chromosome"/>
</dbReference>
<dbReference type="GO" id="GO:0046872">
    <property type="term" value="F:metal ion binding"/>
    <property type="evidence" value="ECO:0007669"/>
    <property type="project" value="UniProtKB-KW"/>
</dbReference>
<dbReference type="GO" id="GO:0042586">
    <property type="term" value="F:peptide deformylase activity"/>
    <property type="evidence" value="ECO:0007669"/>
    <property type="project" value="UniProtKB-UniRule"/>
</dbReference>
<dbReference type="GO" id="GO:0043686">
    <property type="term" value="P:co-translational protein modification"/>
    <property type="evidence" value="ECO:0007669"/>
    <property type="project" value="TreeGrafter"/>
</dbReference>
<dbReference type="GO" id="GO:0006412">
    <property type="term" value="P:translation"/>
    <property type="evidence" value="ECO:0007669"/>
    <property type="project" value="UniProtKB-UniRule"/>
</dbReference>
<dbReference type="CDD" id="cd00487">
    <property type="entry name" value="Pep_deformylase"/>
    <property type="match status" value="1"/>
</dbReference>
<dbReference type="FunFam" id="3.90.45.10:FF:000001">
    <property type="entry name" value="Peptide deformylase"/>
    <property type="match status" value="1"/>
</dbReference>
<dbReference type="Gene3D" id="3.90.45.10">
    <property type="entry name" value="Peptide deformylase"/>
    <property type="match status" value="1"/>
</dbReference>
<dbReference type="HAMAP" id="MF_00163">
    <property type="entry name" value="Pep_deformylase"/>
    <property type="match status" value="1"/>
</dbReference>
<dbReference type="InterPro" id="IPR023635">
    <property type="entry name" value="Peptide_deformylase"/>
</dbReference>
<dbReference type="InterPro" id="IPR036821">
    <property type="entry name" value="Peptide_deformylase_sf"/>
</dbReference>
<dbReference type="NCBIfam" id="TIGR00079">
    <property type="entry name" value="pept_deformyl"/>
    <property type="match status" value="1"/>
</dbReference>
<dbReference type="NCBIfam" id="NF001159">
    <property type="entry name" value="PRK00150.1-3"/>
    <property type="match status" value="1"/>
</dbReference>
<dbReference type="PANTHER" id="PTHR10458">
    <property type="entry name" value="PEPTIDE DEFORMYLASE"/>
    <property type="match status" value="1"/>
</dbReference>
<dbReference type="PANTHER" id="PTHR10458:SF22">
    <property type="entry name" value="PEPTIDE DEFORMYLASE"/>
    <property type="match status" value="1"/>
</dbReference>
<dbReference type="Pfam" id="PF01327">
    <property type="entry name" value="Pep_deformylase"/>
    <property type="match status" value="1"/>
</dbReference>
<dbReference type="PIRSF" id="PIRSF004749">
    <property type="entry name" value="Pep_def"/>
    <property type="match status" value="1"/>
</dbReference>
<dbReference type="PRINTS" id="PR01576">
    <property type="entry name" value="PDEFORMYLASE"/>
</dbReference>
<dbReference type="SUPFAM" id="SSF56420">
    <property type="entry name" value="Peptide deformylase"/>
    <property type="match status" value="1"/>
</dbReference>
<organism>
    <name type="scientific">Psychrobacter arcticus (strain DSM 17307 / VKM B-2377 / 273-4)</name>
    <dbReference type="NCBI Taxonomy" id="259536"/>
    <lineage>
        <taxon>Bacteria</taxon>
        <taxon>Pseudomonadati</taxon>
        <taxon>Pseudomonadota</taxon>
        <taxon>Gammaproteobacteria</taxon>
        <taxon>Moraxellales</taxon>
        <taxon>Moraxellaceae</taxon>
        <taxon>Psychrobacter</taxon>
    </lineage>
</organism>
<protein>
    <recommendedName>
        <fullName evidence="1">Peptide deformylase</fullName>
        <shortName evidence="1">PDF</shortName>
        <ecNumber evidence="1">3.5.1.88</ecNumber>
    </recommendedName>
    <alternativeName>
        <fullName evidence="1">Polypeptide deformylase</fullName>
    </alternativeName>
</protein>
<keyword id="KW-0378">Hydrolase</keyword>
<keyword id="KW-0408">Iron</keyword>
<keyword id="KW-0479">Metal-binding</keyword>
<keyword id="KW-0648">Protein biosynthesis</keyword>
<keyword id="KW-1185">Reference proteome</keyword>
<accession>Q4FVQ4</accession>
<feature type="chain" id="PRO_0000301084" description="Peptide deformylase">
    <location>
        <begin position="1"/>
        <end position="184"/>
    </location>
</feature>
<feature type="active site" evidence="1">
    <location>
        <position position="135"/>
    </location>
</feature>
<feature type="binding site" evidence="1">
    <location>
        <position position="92"/>
    </location>
    <ligand>
        <name>Fe cation</name>
        <dbReference type="ChEBI" id="CHEBI:24875"/>
    </ligand>
</feature>
<feature type="binding site" evidence="1">
    <location>
        <position position="134"/>
    </location>
    <ligand>
        <name>Fe cation</name>
        <dbReference type="ChEBI" id="CHEBI:24875"/>
    </ligand>
</feature>
<feature type="binding site" evidence="1">
    <location>
        <position position="138"/>
    </location>
    <ligand>
        <name>Fe cation</name>
        <dbReference type="ChEBI" id="CHEBI:24875"/>
    </ligand>
</feature>